<reference key="1">
    <citation type="journal article" date="2007" name="J. Bacteriol.">
        <title>The complete genome sequence of the lactic acid bacterial paradigm Lactococcus lactis subsp. cremoris MG1363.</title>
        <authorList>
            <person name="Wegmann U."/>
            <person name="O'Connell-Motherway M."/>
            <person name="Zomer A."/>
            <person name="Buist G."/>
            <person name="Shearman C."/>
            <person name="Canchaya C."/>
            <person name="Ventura M."/>
            <person name="Goesmann A."/>
            <person name="Gasson M.J."/>
            <person name="Kuipers O.P."/>
            <person name="van Sinderen D."/>
            <person name="Kok J."/>
        </authorList>
    </citation>
    <scope>NUCLEOTIDE SEQUENCE [LARGE SCALE GENOMIC DNA]</scope>
    <source>
        <strain>MG1363</strain>
    </source>
</reference>
<proteinExistence type="evidence at protein level"/>
<feature type="chain" id="PRO_0000293299" description="Small ribosomal subunit protein uS4">
    <location>
        <begin position="1"/>
        <end position="203"/>
    </location>
</feature>
<feature type="domain" description="S4 RNA-binding" evidence="1">
    <location>
        <begin position="93"/>
        <end position="156"/>
    </location>
</feature>
<gene>
    <name evidence="1" type="primary">rpsD</name>
    <name type="ordered locus">llmg_0296</name>
</gene>
<sequence length="203" mass="23197">MSRYTGPSWKQSRRYGISLTGSGKEIARRNYVPGQHGPNNRSKLSEYGLQLAEKQKLRFTYGLSERQFRNLYVAATKVKEGTVGYNFMTLLEQRLDNVVYRLGLATTRRQARQFVNHGHILVDGKRVDIPSFRVQPGQVISVREKSMKVPAILEAVEATKGRANFVSFDADKLEGTLVRLPERDEINPEINDALIVEFYNKMM</sequence>
<accession>A2RI10</accession>
<organism>
    <name type="scientific">Lactococcus lactis subsp. cremoris (strain MG1363)</name>
    <dbReference type="NCBI Taxonomy" id="416870"/>
    <lineage>
        <taxon>Bacteria</taxon>
        <taxon>Bacillati</taxon>
        <taxon>Bacillota</taxon>
        <taxon>Bacilli</taxon>
        <taxon>Lactobacillales</taxon>
        <taxon>Streptococcaceae</taxon>
        <taxon>Lactococcus</taxon>
        <taxon>Lactococcus cremoris subsp. cremoris</taxon>
    </lineage>
</organism>
<protein>
    <recommendedName>
        <fullName evidence="1">Small ribosomal subunit protein uS4</fullName>
    </recommendedName>
    <alternativeName>
        <fullName evidence="2">30S ribosomal protein S4</fullName>
    </alternativeName>
</protein>
<comment type="function">
    <text evidence="1">One of the primary rRNA binding proteins, it binds directly to 16S rRNA where it nucleates assembly of the body of the 30S subunit.</text>
</comment>
<comment type="function">
    <text evidence="1">With S5 and S12 plays an important role in translational accuracy.</text>
</comment>
<comment type="subunit">
    <text evidence="1">Part of the 30S ribosomal subunit. Contacts protein S5. The interaction surface between S4 and S5 is involved in control of translational fidelity.</text>
</comment>
<comment type="similarity">
    <text evidence="1">Belongs to the universal ribosomal protein uS4 family.</text>
</comment>
<keyword id="KW-0002">3D-structure</keyword>
<keyword id="KW-0687">Ribonucleoprotein</keyword>
<keyword id="KW-0689">Ribosomal protein</keyword>
<keyword id="KW-0694">RNA-binding</keyword>
<keyword id="KW-0699">rRNA-binding</keyword>
<dbReference type="EMBL" id="AM406671">
    <property type="protein sequence ID" value="CAL96903.1"/>
    <property type="molecule type" value="Genomic_DNA"/>
</dbReference>
<dbReference type="RefSeq" id="WP_011675319.1">
    <property type="nucleotide sequence ID" value="NC_009004.1"/>
</dbReference>
<dbReference type="PDB" id="5MYJ">
    <property type="method" value="EM"/>
    <property type="resolution" value="5.60 A"/>
    <property type="chains" value="AD=1-203"/>
</dbReference>
<dbReference type="PDBsum" id="5MYJ"/>
<dbReference type="EMDB" id="EMD-3581"/>
<dbReference type="SMR" id="A2RI10"/>
<dbReference type="STRING" id="416870.llmg_0296"/>
<dbReference type="GeneID" id="61108605"/>
<dbReference type="KEGG" id="llm:llmg_0296"/>
<dbReference type="eggNOG" id="COG0522">
    <property type="taxonomic scope" value="Bacteria"/>
</dbReference>
<dbReference type="HOGENOM" id="CLU_092403_0_1_9"/>
<dbReference type="OrthoDB" id="9803672at2"/>
<dbReference type="PhylomeDB" id="A2RI10"/>
<dbReference type="Proteomes" id="UP000000364">
    <property type="component" value="Chromosome"/>
</dbReference>
<dbReference type="GO" id="GO:0015935">
    <property type="term" value="C:small ribosomal subunit"/>
    <property type="evidence" value="ECO:0007669"/>
    <property type="project" value="InterPro"/>
</dbReference>
<dbReference type="GO" id="GO:0019843">
    <property type="term" value="F:rRNA binding"/>
    <property type="evidence" value="ECO:0007669"/>
    <property type="project" value="UniProtKB-UniRule"/>
</dbReference>
<dbReference type="GO" id="GO:0003735">
    <property type="term" value="F:structural constituent of ribosome"/>
    <property type="evidence" value="ECO:0007669"/>
    <property type="project" value="InterPro"/>
</dbReference>
<dbReference type="GO" id="GO:0042274">
    <property type="term" value="P:ribosomal small subunit biogenesis"/>
    <property type="evidence" value="ECO:0007669"/>
    <property type="project" value="TreeGrafter"/>
</dbReference>
<dbReference type="GO" id="GO:0006412">
    <property type="term" value="P:translation"/>
    <property type="evidence" value="ECO:0007669"/>
    <property type="project" value="UniProtKB-UniRule"/>
</dbReference>
<dbReference type="CDD" id="cd00165">
    <property type="entry name" value="S4"/>
    <property type="match status" value="1"/>
</dbReference>
<dbReference type="FunFam" id="1.10.1050.10:FF:000001">
    <property type="entry name" value="30S ribosomal protein S4"/>
    <property type="match status" value="1"/>
</dbReference>
<dbReference type="FunFam" id="3.10.290.10:FF:000001">
    <property type="entry name" value="30S ribosomal protein S4"/>
    <property type="match status" value="1"/>
</dbReference>
<dbReference type="Gene3D" id="1.10.1050.10">
    <property type="entry name" value="Ribosomal Protein S4 Delta 41, Chain A, domain 1"/>
    <property type="match status" value="1"/>
</dbReference>
<dbReference type="Gene3D" id="3.10.290.10">
    <property type="entry name" value="RNA-binding S4 domain"/>
    <property type="match status" value="1"/>
</dbReference>
<dbReference type="HAMAP" id="MF_01306_B">
    <property type="entry name" value="Ribosomal_uS4_B"/>
    <property type="match status" value="1"/>
</dbReference>
<dbReference type="InterPro" id="IPR022801">
    <property type="entry name" value="Ribosomal_uS4"/>
</dbReference>
<dbReference type="InterPro" id="IPR005709">
    <property type="entry name" value="Ribosomal_uS4_bac-type"/>
</dbReference>
<dbReference type="InterPro" id="IPR018079">
    <property type="entry name" value="Ribosomal_uS4_CS"/>
</dbReference>
<dbReference type="InterPro" id="IPR001912">
    <property type="entry name" value="Ribosomal_uS4_N"/>
</dbReference>
<dbReference type="InterPro" id="IPR002942">
    <property type="entry name" value="S4_RNA-bd"/>
</dbReference>
<dbReference type="InterPro" id="IPR036986">
    <property type="entry name" value="S4_RNA-bd_sf"/>
</dbReference>
<dbReference type="NCBIfam" id="NF003717">
    <property type="entry name" value="PRK05327.1"/>
    <property type="match status" value="1"/>
</dbReference>
<dbReference type="NCBIfam" id="TIGR01017">
    <property type="entry name" value="rpsD_bact"/>
    <property type="match status" value="1"/>
</dbReference>
<dbReference type="PANTHER" id="PTHR11831">
    <property type="entry name" value="30S 40S RIBOSOMAL PROTEIN"/>
    <property type="match status" value="1"/>
</dbReference>
<dbReference type="PANTHER" id="PTHR11831:SF4">
    <property type="entry name" value="SMALL RIBOSOMAL SUBUNIT PROTEIN US4M"/>
    <property type="match status" value="1"/>
</dbReference>
<dbReference type="Pfam" id="PF00163">
    <property type="entry name" value="Ribosomal_S4"/>
    <property type="match status" value="1"/>
</dbReference>
<dbReference type="Pfam" id="PF01479">
    <property type="entry name" value="S4"/>
    <property type="match status" value="1"/>
</dbReference>
<dbReference type="SMART" id="SM01390">
    <property type="entry name" value="Ribosomal_S4"/>
    <property type="match status" value="1"/>
</dbReference>
<dbReference type="SMART" id="SM00363">
    <property type="entry name" value="S4"/>
    <property type="match status" value="1"/>
</dbReference>
<dbReference type="SUPFAM" id="SSF55174">
    <property type="entry name" value="Alpha-L RNA-binding motif"/>
    <property type="match status" value="1"/>
</dbReference>
<dbReference type="PROSITE" id="PS00632">
    <property type="entry name" value="RIBOSOMAL_S4"/>
    <property type="match status" value="1"/>
</dbReference>
<dbReference type="PROSITE" id="PS50889">
    <property type="entry name" value="S4"/>
    <property type="match status" value="1"/>
</dbReference>
<name>RS4_LACLM</name>
<evidence type="ECO:0000255" key="1">
    <source>
        <dbReference type="HAMAP-Rule" id="MF_01306"/>
    </source>
</evidence>
<evidence type="ECO:0000305" key="2"/>